<feature type="chain" id="PRO_0000210041" description="UPF0337 protein gbs1203">
    <location>
        <begin position="1"/>
        <end position="65"/>
    </location>
</feature>
<feature type="region of interest" description="Disordered" evidence="1">
    <location>
        <begin position="1"/>
        <end position="29"/>
    </location>
</feature>
<feature type="compositionally biased region" description="Basic and acidic residues" evidence="1">
    <location>
        <begin position="1"/>
        <end position="12"/>
    </location>
</feature>
<evidence type="ECO:0000256" key="1">
    <source>
        <dbReference type="SAM" id="MobiDB-lite"/>
    </source>
</evidence>
<evidence type="ECO:0000305" key="2"/>
<protein>
    <recommendedName>
        <fullName>UPF0337 protein gbs1203</fullName>
    </recommendedName>
</protein>
<proteinExistence type="inferred from homology"/>
<name>Y1203_STRA3</name>
<reference key="1">
    <citation type="journal article" date="2002" name="Mol. Microbiol.">
        <title>Genome sequence of Streptococcus agalactiae, a pathogen causing invasive neonatal disease.</title>
        <authorList>
            <person name="Glaser P."/>
            <person name="Rusniok C."/>
            <person name="Buchrieser C."/>
            <person name="Chevalier F."/>
            <person name="Frangeul L."/>
            <person name="Msadek T."/>
            <person name="Zouine M."/>
            <person name="Couve E."/>
            <person name="Lalioui L."/>
            <person name="Poyart C."/>
            <person name="Trieu-Cuot P."/>
            <person name="Kunst F."/>
        </authorList>
    </citation>
    <scope>NUCLEOTIDE SEQUENCE [LARGE SCALE GENOMIC DNA]</scope>
    <source>
        <strain>NEM316</strain>
    </source>
</reference>
<comment type="similarity">
    <text evidence="2">Belongs to the UPF0337 (CsbD) family.</text>
</comment>
<dbReference type="EMBL" id="AL766849">
    <property type="protein sequence ID" value="CAD46862.1"/>
    <property type="molecule type" value="Genomic_DNA"/>
</dbReference>
<dbReference type="RefSeq" id="WP_001288036.1">
    <property type="nucleotide sequence ID" value="NC_004368.1"/>
</dbReference>
<dbReference type="SMR" id="Q8E531"/>
<dbReference type="KEGG" id="san:gbs1203"/>
<dbReference type="eggNOG" id="COG3237">
    <property type="taxonomic scope" value="Bacteria"/>
</dbReference>
<dbReference type="HOGENOM" id="CLU_135567_0_0_9"/>
<dbReference type="Proteomes" id="UP000000823">
    <property type="component" value="Chromosome"/>
</dbReference>
<dbReference type="Gene3D" id="1.10.1470.10">
    <property type="entry name" value="YjbJ"/>
    <property type="match status" value="1"/>
</dbReference>
<dbReference type="InterPro" id="IPR008462">
    <property type="entry name" value="CsbD"/>
</dbReference>
<dbReference type="InterPro" id="IPR036629">
    <property type="entry name" value="YjbJ_sf"/>
</dbReference>
<dbReference type="Pfam" id="PF05532">
    <property type="entry name" value="CsbD"/>
    <property type="match status" value="1"/>
</dbReference>
<dbReference type="SUPFAM" id="SSF69047">
    <property type="entry name" value="Hypothetical protein YjbJ"/>
    <property type="match status" value="1"/>
</dbReference>
<accession>Q8E531</accession>
<gene>
    <name type="ordered locus">gbs1203</name>
</gene>
<sequence length="65" mass="7069">MSEEKFDAKVDKVSGSVKESVGKLTGDKEVESEGKVDKLKGHAKEKLADIKDTIKGASESFKKKD</sequence>
<organism>
    <name type="scientific">Streptococcus agalactiae serotype III (strain NEM316)</name>
    <dbReference type="NCBI Taxonomy" id="211110"/>
    <lineage>
        <taxon>Bacteria</taxon>
        <taxon>Bacillati</taxon>
        <taxon>Bacillota</taxon>
        <taxon>Bacilli</taxon>
        <taxon>Lactobacillales</taxon>
        <taxon>Streptococcaceae</taxon>
        <taxon>Streptococcus</taxon>
    </lineage>
</organism>